<evidence type="ECO:0000255" key="1"/>
<evidence type="ECO:0000255" key="2">
    <source>
        <dbReference type="PROSITE-ProRule" id="PRU00498"/>
    </source>
</evidence>
<evidence type="ECO:0000256" key="3">
    <source>
        <dbReference type="SAM" id="MobiDB-lite"/>
    </source>
</evidence>
<evidence type="ECO:0000269" key="4">
    <source>
    </source>
</evidence>
<evidence type="ECO:0000269" key="5">
    <source>
    </source>
</evidence>
<evidence type="ECO:0000303" key="6">
    <source>
    </source>
</evidence>
<evidence type="ECO:0000305" key="7"/>
<evidence type="ECO:0000305" key="8">
    <source>
    </source>
</evidence>
<gene>
    <name evidence="6" type="primary">chs3</name>
    <name type="ORF">FOXG_12345</name>
</gene>
<feature type="chain" id="PRO_0000460830" description="Chitin synthase 3">
    <location>
        <begin position="1"/>
        <end position="978"/>
    </location>
</feature>
<feature type="transmembrane region" description="Helical" evidence="1">
    <location>
        <begin position="641"/>
        <end position="661"/>
    </location>
</feature>
<feature type="transmembrane region" description="Helical" evidence="1">
    <location>
        <begin position="686"/>
        <end position="706"/>
    </location>
</feature>
<feature type="transmembrane region" description="Helical" evidence="1">
    <location>
        <begin position="719"/>
        <end position="739"/>
    </location>
</feature>
<feature type="transmembrane region" description="Helical" evidence="1">
    <location>
        <begin position="775"/>
        <end position="795"/>
    </location>
</feature>
<feature type="transmembrane region" description="Helical" evidence="1">
    <location>
        <begin position="803"/>
        <end position="823"/>
    </location>
</feature>
<feature type="transmembrane region" description="Helical" evidence="1">
    <location>
        <begin position="908"/>
        <end position="928"/>
    </location>
</feature>
<feature type="transmembrane region" description="Helical" evidence="1">
    <location>
        <begin position="946"/>
        <end position="966"/>
    </location>
</feature>
<feature type="region of interest" description="Disordered" evidence="3">
    <location>
        <begin position="1"/>
        <end position="95"/>
    </location>
</feature>
<feature type="region of interest" description="Disordered" evidence="3">
    <location>
        <begin position="108"/>
        <end position="127"/>
    </location>
</feature>
<feature type="compositionally biased region" description="Low complexity" evidence="3">
    <location>
        <begin position="1"/>
        <end position="13"/>
    </location>
</feature>
<feature type="glycosylation site" description="N-linked (GlcNAc...) asparagine" evidence="2">
    <location>
        <position position="72"/>
    </location>
</feature>
<feature type="glycosylation site" description="N-linked (GlcNAc...) asparagine" evidence="2">
    <location>
        <position position="604"/>
    </location>
</feature>
<feature type="sequence conflict" description="In Ref. 1; AAT77183." evidence="7" ref="1">
    <original>G</original>
    <variation>A</variation>
    <location>
        <position position="441"/>
    </location>
</feature>
<accession>A0A0J9VPT0</accession>
<accession>Q5YCW9</accession>
<organism>
    <name type="scientific">Fusarium oxysporum f. sp. lycopersici (strain 4287 / CBS 123668 / FGSC 9935 / NRRL 34936)</name>
    <name type="common">Fusarium vascular wilt of tomato</name>
    <dbReference type="NCBI Taxonomy" id="426428"/>
    <lineage>
        <taxon>Eukaryota</taxon>
        <taxon>Fungi</taxon>
        <taxon>Dikarya</taxon>
        <taxon>Ascomycota</taxon>
        <taxon>Pezizomycotina</taxon>
        <taxon>Sordariomycetes</taxon>
        <taxon>Hypocreomycetidae</taxon>
        <taxon>Hypocreales</taxon>
        <taxon>Nectriaceae</taxon>
        <taxon>Fusarium</taxon>
        <taxon>Fusarium oxysporum species complex</taxon>
    </lineage>
</organism>
<keyword id="KW-1003">Cell membrane</keyword>
<keyword id="KW-0961">Cell wall biogenesis/degradation</keyword>
<keyword id="KW-0325">Glycoprotein</keyword>
<keyword id="KW-0328">Glycosyltransferase</keyword>
<keyword id="KW-0472">Membrane</keyword>
<keyword id="KW-1185">Reference proteome</keyword>
<keyword id="KW-0808">Transferase</keyword>
<keyword id="KW-0812">Transmembrane</keyword>
<keyword id="KW-1133">Transmembrane helix</keyword>
<reference key="1">
    <citation type="journal article" date="2004" name="Microbiology">
        <title>Role of chitin synthase genes in Fusarium oxysporum.</title>
        <authorList>
            <person name="Martin-Udiroz M."/>
            <person name="Madrid M.P."/>
            <person name="Roncero M.I.G."/>
        </authorList>
    </citation>
    <scope>NUCLEOTIDE SEQUENCE [GENOMIC DNA]</scope>
    <scope>FUNCTION</scope>
    <scope>DISRUPTION PHENOTYPE</scope>
    <source>
        <strain>4287 / CBS 123668 / FGSC 9935 / NRRL 34936</strain>
    </source>
</reference>
<reference key="2">
    <citation type="journal article" date="2010" name="Nature">
        <title>Comparative genomics reveals mobile pathogenicity chromosomes in Fusarium.</title>
        <authorList>
            <person name="Ma L.-J."/>
            <person name="van der Does H.C."/>
            <person name="Borkovich K.A."/>
            <person name="Coleman J.J."/>
            <person name="Daboussi M.-J."/>
            <person name="Di Pietro A."/>
            <person name="Dufresne M."/>
            <person name="Freitag M."/>
            <person name="Grabherr M."/>
            <person name="Henrissat B."/>
            <person name="Houterman P.M."/>
            <person name="Kang S."/>
            <person name="Shim W.-B."/>
            <person name="Woloshuk C."/>
            <person name="Xie X."/>
            <person name="Xu J.-R."/>
            <person name="Antoniw J."/>
            <person name="Baker S.E."/>
            <person name="Bluhm B.H."/>
            <person name="Breakspear A."/>
            <person name="Brown D.W."/>
            <person name="Butchko R.A.E."/>
            <person name="Chapman S."/>
            <person name="Coulson R."/>
            <person name="Coutinho P.M."/>
            <person name="Danchin E.G.J."/>
            <person name="Diener A."/>
            <person name="Gale L.R."/>
            <person name="Gardiner D.M."/>
            <person name="Goff S."/>
            <person name="Hammond-Kosack K.E."/>
            <person name="Hilburn K."/>
            <person name="Hua-Van A."/>
            <person name="Jonkers W."/>
            <person name="Kazan K."/>
            <person name="Kodira C.D."/>
            <person name="Koehrsen M."/>
            <person name="Kumar L."/>
            <person name="Lee Y.-H."/>
            <person name="Li L."/>
            <person name="Manners J.M."/>
            <person name="Miranda-Saavedra D."/>
            <person name="Mukherjee M."/>
            <person name="Park G."/>
            <person name="Park J."/>
            <person name="Park S.-Y."/>
            <person name="Proctor R.H."/>
            <person name="Regev A."/>
            <person name="Ruiz-Roldan M.C."/>
            <person name="Sain D."/>
            <person name="Sakthikumar S."/>
            <person name="Sykes S."/>
            <person name="Schwartz D.C."/>
            <person name="Turgeon B.G."/>
            <person name="Wapinski I."/>
            <person name="Yoder O."/>
            <person name="Young S."/>
            <person name="Zeng Q."/>
            <person name="Zhou S."/>
            <person name="Galagan J."/>
            <person name="Cuomo C.A."/>
            <person name="Kistler H.C."/>
            <person name="Rep M."/>
        </authorList>
    </citation>
    <scope>NUCLEOTIDE SEQUENCE [LARGE SCALE GENOMIC DNA]</scope>
    <source>
        <strain>4287 / CBS 123668 / FGSC 9935 / NRRL 34936</strain>
    </source>
</reference>
<dbReference type="EC" id="2.4.1.16" evidence="8"/>
<dbReference type="EMBL" id="AY572423">
    <property type="protein sequence ID" value="AAT77183.1"/>
    <property type="molecule type" value="Genomic_DNA"/>
</dbReference>
<dbReference type="EMBL" id="DS231711">
    <property type="protein sequence ID" value="KNB12861.1"/>
    <property type="molecule type" value="Genomic_DNA"/>
</dbReference>
<dbReference type="RefSeq" id="XP_018250906.1">
    <property type="nucleotide sequence ID" value="XM_018392108.1"/>
</dbReference>
<dbReference type="SMR" id="A0A0J9VPT0"/>
<dbReference type="CAZy" id="GT2">
    <property type="family name" value="Glycosyltransferase Family 2"/>
</dbReference>
<dbReference type="GeneID" id="28953684"/>
<dbReference type="KEGG" id="fox:FOXG_12345"/>
<dbReference type="VEuPathDB" id="FungiDB:FOXG_12345"/>
<dbReference type="OrthoDB" id="44501at110618"/>
<dbReference type="Proteomes" id="UP000009097">
    <property type="component" value="Unassembled WGS sequence"/>
</dbReference>
<dbReference type="GO" id="GO:0030428">
    <property type="term" value="C:cell septum"/>
    <property type="evidence" value="ECO:0007669"/>
    <property type="project" value="TreeGrafter"/>
</dbReference>
<dbReference type="GO" id="GO:0005886">
    <property type="term" value="C:plasma membrane"/>
    <property type="evidence" value="ECO:0007669"/>
    <property type="project" value="UniProtKB-SubCell"/>
</dbReference>
<dbReference type="GO" id="GO:0004100">
    <property type="term" value="F:chitin synthase activity"/>
    <property type="evidence" value="ECO:0007669"/>
    <property type="project" value="UniProtKB-EC"/>
</dbReference>
<dbReference type="GO" id="GO:0071555">
    <property type="term" value="P:cell wall organization"/>
    <property type="evidence" value="ECO:0007669"/>
    <property type="project" value="UniProtKB-KW"/>
</dbReference>
<dbReference type="GO" id="GO:0006031">
    <property type="term" value="P:chitin biosynthetic process"/>
    <property type="evidence" value="ECO:0007669"/>
    <property type="project" value="InterPro"/>
</dbReference>
<dbReference type="CDD" id="cd04190">
    <property type="entry name" value="Chitin_synth_C"/>
    <property type="match status" value="1"/>
</dbReference>
<dbReference type="InterPro" id="IPR004835">
    <property type="entry name" value="Chitin_synth"/>
</dbReference>
<dbReference type="InterPro" id="IPR004834">
    <property type="entry name" value="Chitin_synth_fun"/>
</dbReference>
<dbReference type="InterPro" id="IPR013616">
    <property type="entry name" value="Chitin_synth_N"/>
</dbReference>
<dbReference type="InterPro" id="IPR029044">
    <property type="entry name" value="Nucleotide-diphossugar_trans"/>
</dbReference>
<dbReference type="PANTHER" id="PTHR22914">
    <property type="entry name" value="CHITIN SYNTHASE"/>
    <property type="match status" value="1"/>
</dbReference>
<dbReference type="PANTHER" id="PTHR22914:SF11">
    <property type="entry name" value="CHITIN SYNTHASE B"/>
    <property type="match status" value="1"/>
</dbReference>
<dbReference type="Pfam" id="PF01644">
    <property type="entry name" value="Chitin_synth_1"/>
    <property type="match status" value="1"/>
</dbReference>
<dbReference type="Pfam" id="PF08407">
    <property type="entry name" value="Chitin_synth_1N"/>
    <property type="match status" value="1"/>
</dbReference>
<dbReference type="SUPFAM" id="SSF53448">
    <property type="entry name" value="Nucleotide-diphospho-sugar transferases"/>
    <property type="match status" value="1"/>
</dbReference>
<comment type="function">
    <text evidence="4 8">Polymerizes chitin, a structural polymer of the cell wall and septum, by transferring the sugar moiety of UDP-GlcNAc to the non-reducing end of the growing chitin polymer (Probable). Is essential for viability (PubMed:15470098).</text>
</comment>
<comment type="catalytic activity">
    <reaction evidence="8">
        <text>[(1-&gt;4)-N-acetyl-beta-D-glucosaminyl](n) + UDP-N-acetyl-alpha-D-glucosamine = [(1-&gt;4)-N-acetyl-beta-D-glucosaminyl](n+1) + UDP + H(+)</text>
        <dbReference type="Rhea" id="RHEA:16637"/>
        <dbReference type="Rhea" id="RHEA-COMP:9593"/>
        <dbReference type="Rhea" id="RHEA-COMP:9595"/>
        <dbReference type="ChEBI" id="CHEBI:15378"/>
        <dbReference type="ChEBI" id="CHEBI:17029"/>
        <dbReference type="ChEBI" id="CHEBI:57705"/>
        <dbReference type="ChEBI" id="CHEBI:58223"/>
        <dbReference type="EC" id="2.4.1.16"/>
    </reaction>
    <physiologicalReaction direction="left-to-right" evidence="8">
        <dbReference type="Rhea" id="RHEA:16638"/>
    </physiologicalReaction>
</comment>
<comment type="subcellular location">
    <subcellularLocation>
        <location evidence="7">Cell membrane</location>
        <topology evidence="1">Multi-pass membrane protein</topology>
    </subcellularLocation>
</comment>
<comment type="disruption phenotype">
    <text evidence="5">Leads to lethality.</text>
</comment>
<comment type="similarity">
    <text evidence="7">Belongs to the chitin synthase family. Class III subfamily.</text>
</comment>
<name>CHS3_FUSO4</name>
<sequence length="978" mass="110351">MGFNPQGQGNGPNYDAPREMQDLPAGQAYHFRESDETAAARVSPVSNPYEPDYDQLSPPPPLGAQRPVPEQNESSRDLLHSSYQGSVGHNSFDGHSFGHNSYGPGAFGHYPADQHGRMPGSPGYEYPEPEYDVEASRLAESRLSVMHRAPTMQDWGQNGEALSVPDFAHGRPDSTYQEFDVDESWMMRQQQNQLAGGLGRSKTRKVKLVQGSVLSIDYPVPSAIKNAVEPRYRSGPGSMEEEFTKMRYTAATCDPNDFTLRNGFNLRPKMYNRHTELLIAITYYNEDKVLLARTLHGTMQNIRDIVNLKRSKFWNKGGPAWQKIVVCLVFDGIDKVDKNVFDVLATVGIYQDGVLKKDVNGKETVAHIFEYTSQVSVTPDQQLVRPDPDKPHRNLPPVQFIFCLKQKNSKKINSHRWLFNAFGRILNPEVAILIDAGTKPGPRALLSLWEGFYNDRDLGGACGEIHVMLGKGGKMLLNPLVAVQNFEYKISNVLDKPLESAFGYVSVLPGAFSAYRFRAIMGRPLEQYFHGDHTLSKSLGKKGIDGMNIFKKNMFLAEDRILCFELVAKASQKWHLSYIKASKGETDVPEGAAEFIGQRRRWLNGSFAMSLYSLMHFGRMYGSGHNLIRLFFLHIQFVYNLVNVLFSWFSLAAFYLTTTIIMKLVGTPQVLSEYHGWPFGDTATPIVNVLIKYIYIAFLVLQFVLALGNRPKGAQYTYVLSFMVFGLIQLYLLVLTGYLVYRAFTGTPIEEQISFESGKAFFDSFFGGDTGVAGLIIIALFTIYGLNYIASFLYLDPWHMFHSFPQYLVLMSTYINILMVYAFNNWHDVSWGTKGSDTAEALPSAMIVKDEKGKEAVVEEIEQEQEDIDSKFEKVVWRALAPMSEMAEEKPEKKDVEDSYKSFRTGLVILWLLCNIVLIVVVTTDDFITLGVSKAADVRTPTYFRVLLYSTAVLSIVRFFGFLWFIGRTGIMCCIARR</sequence>
<protein>
    <recommendedName>
        <fullName evidence="6">Chitin synthase 3</fullName>
        <ecNumber evidence="8">2.4.1.16</ecNumber>
    </recommendedName>
    <alternativeName>
        <fullName evidence="7">Chitin-UDP acetyl-glucosaminyl transferase 3</fullName>
    </alternativeName>
    <alternativeName>
        <fullName evidence="6">Class-III chitin synthase 3</fullName>
    </alternativeName>
</protein>
<proteinExistence type="inferred from homology"/>